<proteinExistence type="predicted"/>
<keyword id="KW-1185">Reference proteome</keyword>
<protein>
    <recommendedName>
        <fullName>Uncharacterized 9.4 kDa protein in nrdB-nrdA intergenic region</fullName>
    </recommendedName>
</protein>
<organismHost>
    <name type="scientific">Escherichia coli</name>
    <dbReference type="NCBI Taxonomy" id="562"/>
</organismHost>
<gene>
    <name type="primary">y13L</name>
    <name type="synonym">nrdB.1</name>
</gene>
<feature type="chain" id="PRO_0000165185" description="Uncharacterized 9.4 kDa protein in nrdB-nrdA intergenic region">
    <location>
        <begin position="1"/>
        <end position="83"/>
    </location>
</feature>
<name>Y13L_BPT4</name>
<accession>P39505</accession>
<dbReference type="EMBL" id="AF158101">
    <property type="protein sequence ID" value="AAD42625.1"/>
    <property type="molecule type" value="Genomic_DNA"/>
</dbReference>
<dbReference type="RefSeq" id="NP_049843.1">
    <property type="nucleotide sequence ID" value="NC_000866.4"/>
</dbReference>
<dbReference type="SMR" id="P39505"/>
<dbReference type="GeneID" id="1258813"/>
<dbReference type="KEGG" id="vg:1258813"/>
<dbReference type="OrthoDB" id="19703at10239"/>
<dbReference type="Proteomes" id="UP000009087">
    <property type="component" value="Segment"/>
</dbReference>
<dbReference type="GO" id="GO:0003677">
    <property type="term" value="F:DNA binding"/>
    <property type="evidence" value="ECO:0007669"/>
    <property type="project" value="InterPro"/>
</dbReference>
<dbReference type="InterPro" id="IPR003611">
    <property type="entry name" value="NUMOD3"/>
</dbReference>
<dbReference type="Pfam" id="PF07460">
    <property type="entry name" value="NUMOD3"/>
    <property type="match status" value="1"/>
</dbReference>
<sequence length="83" mass="9409">MRKPKTEEAKKNIAAAKVGVLNPMYGTISPTRDVPHTKETRDLISLRTKQGAEYPPCPHCGKKVNKGNALRWHYDKCKFKDSK</sequence>
<reference key="1">
    <citation type="journal article" date="2003" name="Microbiol. Mol. Biol. Rev.">
        <title>Bacteriophage T4 genome.</title>
        <authorList>
            <person name="Miller E.S."/>
            <person name="Kutter E."/>
            <person name="Mosig G."/>
            <person name="Arisaka F."/>
            <person name="Kunisawa T."/>
            <person name="Ruger W."/>
        </authorList>
    </citation>
    <scope>NUCLEOTIDE SEQUENCE [LARGE SCALE GENOMIC DNA]</scope>
</reference>
<organism>
    <name type="scientific">Enterobacteria phage T4</name>
    <name type="common">Bacteriophage T4</name>
    <dbReference type="NCBI Taxonomy" id="10665"/>
    <lineage>
        <taxon>Viruses</taxon>
        <taxon>Duplodnaviria</taxon>
        <taxon>Heunggongvirae</taxon>
        <taxon>Uroviricota</taxon>
        <taxon>Caudoviricetes</taxon>
        <taxon>Straboviridae</taxon>
        <taxon>Tevenvirinae</taxon>
        <taxon>Tequatrovirus</taxon>
    </lineage>
</organism>